<dbReference type="EC" id="4.2.3.5" evidence="1"/>
<dbReference type="EMBL" id="BA000017">
    <property type="protein sequence ID" value="BAB57628.1"/>
    <property type="molecule type" value="Genomic_DNA"/>
</dbReference>
<dbReference type="RefSeq" id="WP_001269921.1">
    <property type="nucleotide sequence ID" value="NC_002758.2"/>
</dbReference>
<dbReference type="SMR" id="P63613"/>
<dbReference type="KEGG" id="sav:SAV1466"/>
<dbReference type="HOGENOM" id="CLU_034547_2_0_9"/>
<dbReference type="PhylomeDB" id="P63613"/>
<dbReference type="UniPathway" id="UPA00053">
    <property type="reaction ID" value="UER00090"/>
</dbReference>
<dbReference type="Proteomes" id="UP000002481">
    <property type="component" value="Chromosome"/>
</dbReference>
<dbReference type="GO" id="GO:0005829">
    <property type="term" value="C:cytosol"/>
    <property type="evidence" value="ECO:0007669"/>
    <property type="project" value="TreeGrafter"/>
</dbReference>
<dbReference type="GO" id="GO:0004107">
    <property type="term" value="F:chorismate synthase activity"/>
    <property type="evidence" value="ECO:0007669"/>
    <property type="project" value="UniProtKB-UniRule"/>
</dbReference>
<dbReference type="GO" id="GO:0010181">
    <property type="term" value="F:FMN binding"/>
    <property type="evidence" value="ECO:0007669"/>
    <property type="project" value="TreeGrafter"/>
</dbReference>
<dbReference type="GO" id="GO:0008652">
    <property type="term" value="P:amino acid biosynthetic process"/>
    <property type="evidence" value="ECO:0007669"/>
    <property type="project" value="UniProtKB-KW"/>
</dbReference>
<dbReference type="GO" id="GO:0009073">
    <property type="term" value="P:aromatic amino acid family biosynthetic process"/>
    <property type="evidence" value="ECO:0007669"/>
    <property type="project" value="UniProtKB-KW"/>
</dbReference>
<dbReference type="GO" id="GO:0009423">
    <property type="term" value="P:chorismate biosynthetic process"/>
    <property type="evidence" value="ECO:0007669"/>
    <property type="project" value="UniProtKB-UniRule"/>
</dbReference>
<dbReference type="CDD" id="cd07304">
    <property type="entry name" value="Chorismate_synthase"/>
    <property type="match status" value="1"/>
</dbReference>
<dbReference type="FunFam" id="3.60.150.10:FF:000002">
    <property type="entry name" value="Chorismate synthase"/>
    <property type="match status" value="1"/>
</dbReference>
<dbReference type="Gene3D" id="3.60.150.10">
    <property type="entry name" value="Chorismate synthase AroC"/>
    <property type="match status" value="1"/>
</dbReference>
<dbReference type="HAMAP" id="MF_00300">
    <property type="entry name" value="Chorismate_synth"/>
    <property type="match status" value="1"/>
</dbReference>
<dbReference type="InterPro" id="IPR000453">
    <property type="entry name" value="Chorismate_synth"/>
</dbReference>
<dbReference type="InterPro" id="IPR035904">
    <property type="entry name" value="Chorismate_synth_AroC_sf"/>
</dbReference>
<dbReference type="InterPro" id="IPR020541">
    <property type="entry name" value="Chorismate_synthase_CS"/>
</dbReference>
<dbReference type="NCBIfam" id="TIGR00033">
    <property type="entry name" value="aroC"/>
    <property type="match status" value="1"/>
</dbReference>
<dbReference type="NCBIfam" id="NF003793">
    <property type="entry name" value="PRK05382.1"/>
    <property type="match status" value="1"/>
</dbReference>
<dbReference type="PANTHER" id="PTHR21085">
    <property type="entry name" value="CHORISMATE SYNTHASE"/>
    <property type="match status" value="1"/>
</dbReference>
<dbReference type="PANTHER" id="PTHR21085:SF0">
    <property type="entry name" value="CHORISMATE SYNTHASE"/>
    <property type="match status" value="1"/>
</dbReference>
<dbReference type="Pfam" id="PF01264">
    <property type="entry name" value="Chorismate_synt"/>
    <property type="match status" value="1"/>
</dbReference>
<dbReference type="PIRSF" id="PIRSF001456">
    <property type="entry name" value="Chorismate_synth"/>
    <property type="match status" value="1"/>
</dbReference>
<dbReference type="SUPFAM" id="SSF103263">
    <property type="entry name" value="Chorismate synthase, AroC"/>
    <property type="match status" value="1"/>
</dbReference>
<dbReference type="PROSITE" id="PS00787">
    <property type="entry name" value="CHORISMATE_SYNTHASE_1"/>
    <property type="match status" value="1"/>
</dbReference>
<dbReference type="PROSITE" id="PS00788">
    <property type="entry name" value="CHORISMATE_SYNTHASE_2"/>
    <property type="match status" value="1"/>
</dbReference>
<dbReference type="PROSITE" id="PS00789">
    <property type="entry name" value="CHORISMATE_SYNTHASE_3"/>
    <property type="match status" value="1"/>
</dbReference>
<sequence>MRYLTSGESHGPQLTVIVEGIPANLEIKVEDINKEMFKRQGGYGRGRRMQIEKDTVEIVSGVRNGYTLGSPITMVVTNDDFTHWRKIMGAAPISEEERENMKRTITKPRPGHADLVGGMKYNHRDLRNVLERSSARETAARVAVGALCKVLLQQLDIDIYSRVVEIGGIKDKDFYDSETFKANLDRNDVRVIDDSIAQAMRDKIDEAKNEGDSIGGVVQVVVENMPVGVGSYVHYDRKLDGKIAQGVVSINAFKGVSFGEGFKAAEKPGSEIQDEILYNSEIGYYRGSNHLGGLEGGMSNGMPIIVNGVMKPIPTLYKPLNSVDINTKEDFKATIERSDSCAVPAASIVCEHVVAFEIAKALLEEFQSNHIEQLQQQIADRRQLNVEF</sequence>
<evidence type="ECO:0000255" key="1">
    <source>
        <dbReference type="HAMAP-Rule" id="MF_00300"/>
    </source>
</evidence>
<accession>P63613</accession>
<accession>Q99U23</accession>
<proteinExistence type="inferred from homology"/>
<name>AROC_STAAM</name>
<gene>
    <name evidence="1" type="primary">aroC</name>
    <name type="ordered locus">SAV1466</name>
</gene>
<reference key="1">
    <citation type="journal article" date="2001" name="Lancet">
        <title>Whole genome sequencing of meticillin-resistant Staphylococcus aureus.</title>
        <authorList>
            <person name="Kuroda M."/>
            <person name="Ohta T."/>
            <person name="Uchiyama I."/>
            <person name="Baba T."/>
            <person name="Yuzawa H."/>
            <person name="Kobayashi I."/>
            <person name="Cui L."/>
            <person name="Oguchi A."/>
            <person name="Aoki K."/>
            <person name="Nagai Y."/>
            <person name="Lian J.-Q."/>
            <person name="Ito T."/>
            <person name="Kanamori M."/>
            <person name="Matsumaru H."/>
            <person name="Maruyama A."/>
            <person name="Murakami H."/>
            <person name="Hosoyama A."/>
            <person name="Mizutani-Ui Y."/>
            <person name="Takahashi N.K."/>
            <person name="Sawano T."/>
            <person name="Inoue R."/>
            <person name="Kaito C."/>
            <person name="Sekimizu K."/>
            <person name="Hirakawa H."/>
            <person name="Kuhara S."/>
            <person name="Goto S."/>
            <person name="Yabuzaki J."/>
            <person name="Kanehisa M."/>
            <person name="Yamashita A."/>
            <person name="Oshima K."/>
            <person name="Furuya K."/>
            <person name="Yoshino C."/>
            <person name="Shiba T."/>
            <person name="Hattori M."/>
            <person name="Ogasawara N."/>
            <person name="Hayashi H."/>
            <person name="Hiramatsu K."/>
        </authorList>
    </citation>
    <scope>NUCLEOTIDE SEQUENCE [LARGE SCALE GENOMIC DNA]</scope>
    <source>
        <strain>Mu50 / ATCC 700699</strain>
    </source>
</reference>
<keyword id="KW-0028">Amino-acid biosynthesis</keyword>
<keyword id="KW-0057">Aromatic amino acid biosynthesis</keyword>
<keyword id="KW-0274">FAD</keyword>
<keyword id="KW-0285">Flavoprotein</keyword>
<keyword id="KW-0288">FMN</keyword>
<keyword id="KW-0456">Lyase</keyword>
<keyword id="KW-0521">NADP</keyword>
<feature type="chain" id="PRO_0000140642" description="Chorismate synthase">
    <location>
        <begin position="1"/>
        <end position="388"/>
    </location>
</feature>
<feature type="binding site" evidence="1">
    <location>
        <position position="39"/>
    </location>
    <ligand>
        <name>NADP(+)</name>
        <dbReference type="ChEBI" id="CHEBI:58349"/>
    </ligand>
</feature>
<feature type="binding site" evidence="1">
    <location>
        <position position="45"/>
    </location>
    <ligand>
        <name>NADP(+)</name>
        <dbReference type="ChEBI" id="CHEBI:58349"/>
    </ligand>
</feature>
<feature type="binding site" evidence="1">
    <location>
        <begin position="132"/>
        <end position="134"/>
    </location>
    <ligand>
        <name>FMN</name>
        <dbReference type="ChEBI" id="CHEBI:58210"/>
    </ligand>
</feature>
<feature type="binding site" evidence="1">
    <location>
        <begin position="251"/>
        <end position="252"/>
    </location>
    <ligand>
        <name>FMN</name>
        <dbReference type="ChEBI" id="CHEBI:58210"/>
    </ligand>
</feature>
<feature type="binding site" evidence="1">
    <location>
        <position position="296"/>
    </location>
    <ligand>
        <name>FMN</name>
        <dbReference type="ChEBI" id="CHEBI:58210"/>
    </ligand>
</feature>
<feature type="binding site" evidence="1">
    <location>
        <begin position="311"/>
        <end position="315"/>
    </location>
    <ligand>
        <name>FMN</name>
        <dbReference type="ChEBI" id="CHEBI:58210"/>
    </ligand>
</feature>
<feature type="binding site" evidence="1">
    <location>
        <position position="337"/>
    </location>
    <ligand>
        <name>FMN</name>
        <dbReference type="ChEBI" id="CHEBI:58210"/>
    </ligand>
</feature>
<comment type="function">
    <text evidence="1">Catalyzes the anti-1,4-elimination of the C-3 phosphate and the C-6 proR hydrogen from 5-enolpyruvylshikimate-3-phosphate (EPSP) to yield chorismate, which is the branch point compound that serves as the starting substrate for the three terminal pathways of aromatic amino acid biosynthesis. This reaction introduces a second double bond into the aromatic ring system.</text>
</comment>
<comment type="catalytic activity">
    <reaction evidence="1">
        <text>5-O-(1-carboxyvinyl)-3-phosphoshikimate = chorismate + phosphate</text>
        <dbReference type="Rhea" id="RHEA:21020"/>
        <dbReference type="ChEBI" id="CHEBI:29748"/>
        <dbReference type="ChEBI" id="CHEBI:43474"/>
        <dbReference type="ChEBI" id="CHEBI:57701"/>
        <dbReference type="EC" id="4.2.3.5"/>
    </reaction>
</comment>
<comment type="cofactor">
    <cofactor evidence="1">
        <name>FMNH2</name>
        <dbReference type="ChEBI" id="CHEBI:57618"/>
    </cofactor>
    <text evidence="1">Reduced FMN (FMNH(2)).</text>
</comment>
<comment type="pathway">
    <text evidence="1">Metabolic intermediate biosynthesis; chorismate biosynthesis; chorismate from D-erythrose 4-phosphate and phosphoenolpyruvate: step 7/7.</text>
</comment>
<comment type="subunit">
    <text evidence="1">Homotetramer.</text>
</comment>
<comment type="similarity">
    <text evidence="1">Belongs to the chorismate synthase family.</text>
</comment>
<organism>
    <name type="scientific">Staphylococcus aureus (strain Mu50 / ATCC 700699)</name>
    <dbReference type="NCBI Taxonomy" id="158878"/>
    <lineage>
        <taxon>Bacteria</taxon>
        <taxon>Bacillati</taxon>
        <taxon>Bacillota</taxon>
        <taxon>Bacilli</taxon>
        <taxon>Bacillales</taxon>
        <taxon>Staphylococcaceae</taxon>
        <taxon>Staphylococcus</taxon>
    </lineage>
</organism>
<protein>
    <recommendedName>
        <fullName evidence="1">Chorismate synthase</fullName>
        <shortName evidence="1">CS</shortName>
        <ecNumber evidence="1">4.2.3.5</ecNumber>
    </recommendedName>
    <alternativeName>
        <fullName evidence="1">5-enolpyruvylshikimate-3-phosphate phospholyase</fullName>
    </alternativeName>
</protein>